<proteinExistence type="predicted"/>
<organism>
    <name type="scientific">Synechocystis sp. (strain ATCC 27184 / PCC 6803 / Kazusa)</name>
    <dbReference type="NCBI Taxonomy" id="1111708"/>
    <lineage>
        <taxon>Bacteria</taxon>
        <taxon>Bacillati</taxon>
        <taxon>Cyanobacteriota</taxon>
        <taxon>Cyanophyceae</taxon>
        <taxon>Synechococcales</taxon>
        <taxon>Merismopediaceae</taxon>
        <taxon>Synechocystis</taxon>
    </lineage>
</organism>
<name>Y1851_SYNY3</name>
<protein>
    <recommendedName>
        <fullName>Uncharacterized protein slr1851</fullName>
    </recommendedName>
</protein>
<accession>P73063</accession>
<sequence>MKTMDAQEILRCYAQGQRDFSHINLVRVCLSNASLIGAQLIFVDLGGANLTRAQLDSATLKNANLALANMTEVCLIYADLSNADLSGANLVGADLTNADLSGAKLGGADLRKANLSEASLRGADLRGVNLIEANLTNTDFSEADLTGAYISDGAVINVVNLS</sequence>
<gene>
    <name type="ordered locus">slr1851</name>
</gene>
<dbReference type="EMBL" id="BA000022">
    <property type="protein sequence ID" value="BAA17085.1"/>
    <property type="molecule type" value="Genomic_DNA"/>
</dbReference>
<dbReference type="PIR" id="S75171">
    <property type="entry name" value="S75171"/>
</dbReference>
<dbReference type="SMR" id="P73063"/>
<dbReference type="IntAct" id="P73063">
    <property type="interactions" value="5"/>
</dbReference>
<dbReference type="STRING" id="1148.gene:10497946"/>
<dbReference type="PaxDb" id="1148-1652161"/>
<dbReference type="EnsemblBacteria" id="BAA17085">
    <property type="protein sequence ID" value="BAA17085"/>
    <property type="gene ID" value="BAA17085"/>
</dbReference>
<dbReference type="KEGG" id="syn:slr1851"/>
<dbReference type="eggNOG" id="COG1357">
    <property type="taxonomic scope" value="Bacteria"/>
</dbReference>
<dbReference type="InParanoid" id="P73063"/>
<dbReference type="PhylomeDB" id="P73063"/>
<dbReference type="Proteomes" id="UP000001425">
    <property type="component" value="Chromosome"/>
</dbReference>
<dbReference type="Gene3D" id="2.160.20.80">
    <property type="entry name" value="E3 ubiquitin-protein ligase SopA"/>
    <property type="match status" value="1"/>
</dbReference>
<dbReference type="InterPro" id="IPR001646">
    <property type="entry name" value="5peptide_repeat"/>
</dbReference>
<dbReference type="PANTHER" id="PTHR47485">
    <property type="entry name" value="THYLAKOID LUMENAL 17.4 KDA PROTEIN, CHLOROPLASTIC"/>
    <property type="match status" value="1"/>
</dbReference>
<dbReference type="PANTHER" id="PTHR47485:SF1">
    <property type="entry name" value="THYLAKOID LUMENAL 17.4 KDA PROTEIN, CHLOROPLASTIC"/>
    <property type="match status" value="1"/>
</dbReference>
<dbReference type="Pfam" id="PF00805">
    <property type="entry name" value="Pentapeptide"/>
    <property type="match status" value="2"/>
</dbReference>
<dbReference type="SUPFAM" id="SSF141571">
    <property type="entry name" value="Pentapeptide repeat-like"/>
    <property type="match status" value="1"/>
</dbReference>
<reference key="1">
    <citation type="journal article" date="1996" name="DNA Res.">
        <title>Sequence analysis of the genome of the unicellular cyanobacterium Synechocystis sp. strain PCC6803. II. Sequence determination of the entire genome and assignment of potential protein-coding regions.</title>
        <authorList>
            <person name="Kaneko T."/>
            <person name="Sato S."/>
            <person name="Kotani H."/>
            <person name="Tanaka A."/>
            <person name="Asamizu E."/>
            <person name="Nakamura Y."/>
            <person name="Miyajima N."/>
            <person name="Hirosawa M."/>
            <person name="Sugiura M."/>
            <person name="Sasamoto S."/>
            <person name="Kimura T."/>
            <person name="Hosouchi T."/>
            <person name="Matsuno A."/>
            <person name="Muraki A."/>
            <person name="Nakazaki N."/>
            <person name="Naruo K."/>
            <person name="Okumura S."/>
            <person name="Shimpo S."/>
            <person name="Takeuchi C."/>
            <person name="Wada T."/>
            <person name="Watanabe A."/>
            <person name="Yamada M."/>
            <person name="Yasuda M."/>
            <person name="Tabata S."/>
        </authorList>
    </citation>
    <scope>NUCLEOTIDE SEQUENCE [LARGE SCALE GENOMIC DNA]</scope>
    <source>
        <strain>ATCC 27184 / PCC 6803 / Kazusa</strain>
    </source>
</reference>
<keyword id="KW-1185">Reference proteome</keyword>
<keyword id="KW-0677">Repeat</keyword>
<feature type="chain" id="PRO_0000217683" description="Uncharacterized protein slr1851">
    <location>
        <begin position="1"/>
        <end position="162"/>
    </location>
</feature>
<feature type="domain" description="Pentapeptide repeat 1">
    <location>
        <begin position="33"/>
        <end position="72"/>
    </location>
</feature>
<feature type="domain" description="Pentapeptide repeat 2">
    <location>
        <begin position="73"/>
        <end position="112"/>
    </location>
</feature>
<feature type="domain" description="Pentapeptide repeat 3">
    <location>
        <begin position="113"/>
        <end position="152"/>
    </location>
</feature>